<sequence>MATTAAPAGGARNGAGPEWGGFEENIQGGGSAVIDMENMDDTSGSSFEDMGELHQRLREEEVDADAADAAAAEEEDGEFLGMKGFKGQLSRQVADQMWQAGKRQASRAFSLYANIDILRPYFDVEPAQVRSRLLESMIPIKMVNFPQKIAGELYGPLMLVFTLVAILLHGMKTSDTIIREGTLMGTAIGTCFGYWLGVSSFIYFLAYLCNAQITMLQMLALLGYGLFGHCIVLFITYNIHLHALFYLFWLLVGGLSTLRMVAVLVSRTVGPTQRLLLCGTLAALHMLFLLYLHFAYHKVVEGILDTLEGPNIPPIQRVPRDIPAMLPAARLPTTVLNATAKAVAVTLQSH</sequence>
<reference key="1">
    <citation type="journal article" date="2002" name="Blood Cells Mol. Dis.">
        <title>Characterization of a novel hematopoietic marker expressed from early embryonic hematopoietic stem cells to adult mature lineages.</title>
        <authorList>
            <person name="Prost S."/>
            <person name="LeDiscorde M."/>
            <person name="Haddad R."/>
            <person name="Gluckman J.-C."/>
            <person name="Canque B."/>
            <person name="Kirszenbaum M."/>
        </authorList>
    </citation>
    <scope>NUCLEOTIDE SEQUENCE [MRNA]</scope>
    <scope>FUNCTION</scope>
    <scope>DEVELOPMENTAL STAGE</scope>
    <scope>TISSUE SPECIFICITY</scope>
    <scope>GLYCOSYLATION</scope>
    <scope>SUBCELLULAR LOCATION</scope>
    <source>
        <tissue>Lung</tissue>
    </source>
</reference>
<reference key="2">
    <citation type="journal article" date="2004" name="Nat. Genet.">
        <title>Complete sequencing and characterization of 21,243 full-length human cDNAs.</title>
        <authorList>
            <person name="Ota T."/>
            <person name="Suzuki Y."/>
            <person name="Nishikawa T."/>
            <person name="Otsuki T."/>
            <person name="Sugiyama T."/>
            <person name="Irie R."/>
            <person name="Wakamatsu A."/>
            <person name="Hayashi K."/>
            <person name="Sato H."/>
            <person name="Nagai K."/>
            <person name="Kimura K."/>
            <person name="Makita H."/>
            <person name="Sekine M."/>
            <person name="Obayashi M."/>
            <person name="Nishi T."/>
            <person name="Shibahara T."/>
            <person name="Tanaka T."/>
            <person name="Ishii S."/>
            <person name="Yamamoto J."/>
            <person name="Saito K."/>
            <person name="Kawai Y."/>
            <person name="Isono Y."/>
            <person name="Nakamura Y."/>
            <person name="Nagahari K."/>
            <person name="Murakami K."/>
            <person name="Yasuda T."/>
            <person name="Iwayanagi T."/>
            <person name="Wagatsuma M."/>
            <person name="Shiratori A."/>
            <person name="Sudo H."/>
            <person name="Hosoiri T."/>
            <person name="Kaku Y."/>
            <person name="Kodaira H."/>
            <person name="Kondo H."/>
            <person name="Sugawara M."/>
            <person name="Takahashi M."/>
            <person name="Kanda K."/>
            <person name="Yokoi T."/>
            <person name="Furuya T."/>
            <person name="Kikkawa E."/>
            <person name="Omura Y."/>
            <person name="Abe K."/>
            <person name="Kamihara K."/>
            <person name="Katsuta N."/>
            <person name="Sato K."/>
            <person name="Tanikawa M."/>
            <person name="Yamazaki M."/>
            <person name="Ninomiya K."/>
            <person name="Ishibashi T."/>
            <person name="Yamashita H."/>
            <person name="Murakawa K."/>
            <person name="Fujimori K."/>
            <person name="Tanai H."/>
            <person name="Kimata M."/>
            <person name="Watanabe M."/>
            <person name="Hiraoka S."/>
            <person name="Chiba Y."/>
            <person name="Ishida S."/>
            <person name="Ono Y."/>
            <person name="Takiguchi S."/>
            <person name="Watanabe S."/>
            <person name="Yosida M."/>
            <person name="Hotuta T."/>
            <person name="Kusano J."/>
            <person name="Kanehori K."/>
            <person name="Takahashi-Fujii A."/>
            <person name="Hara H."/>
            <person name="Tanase T.-O."/>
            <person name="Nomura Y."/>
            <person name="Togiya S."/>
            <person name="Komai F."/>
            <person name="Hara R."/>
            <person name="Takeuchi K."/>
            <person name="Arita M."/>
            <person name="Imose N."/>
            <person name="Musashino K."/>
            <person name="Yuuki H."/>
            <person name="Oshima A."/>
            <person name="Sasaki N."/>
            <person name="Aotsuka S."/>
            <person name="Yoshikawa Y."/>
            <person name="Matsunawa H."/>
            <person name="Ichihara T."/>
            <person name="Shiohata N."/>
            <person name="Sano S."/>
            <person name="Moriya S."/>
            <person name="Momiyama H."/>
            <person name="Satoh N."/>
            <person name="Takami S."/>
            <person name="Terashima Y."/>
            <person name="Suzuki O."/>
            <person name="Nakagawa S."/>
            <person name="Senoh A."/>
            <person name="Mizoguchi H."/>
            <person name="Goto Y."/>
            <person name="Shimizu F."/>
            <person name="Wakebe H."/>
            <person name="Hishigaki H."/>
            <person name="Watanabe T."/>
            <person name="Sugiyama A."/>
            <person name="Takemoto M."/>
            <person name="Kawakami B."/>
            <person name="Yamazaki M."/>
            <person name="Watanabe K."/>
            <person name="Kumagai A."/>
            <person name="Itakura S."/>
            <person name="Fukuzumi Y."/>
            <person name="Fujimori Y."/>
            <person name="Komiyama M."/>
            <person name="Tashiro H."/>
            <person name="Tanigami A."/>
            <person name="Fujiwara T."/>
            <person name="Ono T."/>
            <person name="Yamada K."/>
            <person name="Fujii Y."/>
            <person name="Ozaki K."/>
            <person name="Hirao M."/>
            <person name="Ohmori Y."/>
            <person name="Kawabata A."/>
            <person name="Hikiji T."/>
            <person name="Kobatake N."/>
            <person name="Inagaki H."/>
            <person name="Ikema Y."/>
            <person name="Okamoto S."/>
            <person name="Okitani R."/>
            <person name="Kawakami T."/>
            <person name="Noguchi S."/>
            <person name="Itoh T."/>
            <person name="Shigeta K."/>
            <person name="Senba T."/>
            <person name="Matsumura K."/>
            <person name="Nakajima Y."/>
            <person name="Mizuno T."/>
            <person name="Morinaga M."/>
            <person name="Sasaki M."/>
            <person name="Togashi T."/>
            <person name="Oyama M."/>
            <person name="Hata H."/>
            <person name="Watanabe M."/>
            <person name="Komatsu T."/>
            <person name="Mizushima-Sugano J."/>
            <person name="Satoh T."/>
            <person name="Shirai Y."/>
            <person name="Takahashi Y."/>
            <person name="Nakagawa K."/>
            <person name="Okumura K."/>
            <person name="Nagase T."/>
            <person name="Nomura N."/>
            <person name="Kikuchi H."/>
            <person name="Masuho Y."/>
            <person name="Yamashita R."/>
            <person name="Nakai K."/>
            <person name="Yada T."/>
            <person name="Nakamura Y."/>
            <person name="Ohara O."/>
            <person name="Isogai T."/>
            <person name="Sugano S."/>
        </authorList>
    </citation>
    <scope>NUCLEOTIDE SEQUENCE [LARGE SCALE MRNA]</scope>
    <source>
        <tissue>Embryo</tissue>
    </source>
</reference>
<reference key="3">
    <citation type="journal article" date="2003" name="Nature">
        <title>The DNA sequence and analysis of human chromosome 6.</title>
        <authorList>
            <person name="Mungall A.J."/>
            <person name="Palmer S.A."/>
            <person name="Sims S.K."/>
            <person name="Edwards C.A."/>
            <person name="Ashurst J.L."/>
            <person name="Wilming L."/>
            <person name="Jones M.C."/>
            <person name="Horton R."/>
            <person name="Hunt S.E."/>
            <person name="Scott C.E."/>
            <person name="Gilbert J.G.R."/>
            <person name="Clamp M.E."/>
            <person name="Bethel G."/>
            <person name="Milne S."/>
            <person name="Ainscough R."/>
            <person name="Almeida J.P."/>
            <person name="Ambrose K.D."/>
            <person name="Andrews T.D."/>
            <person name="Ashwell R.I.S."/>
            <person name="Babbage A.K."/>
            <person name="Bagguley C.L."/>
            <person name="Bailey J."/>
            <person name="Banerjee R."/>
            <person name="Barker D.J."/>
            <person name="Barlow K.F."/>
            <person name="Bates K."/>
            <person name="Beare D.M."/>
            <person name="Beasley H."/>
            <person name="Beasley O."/>
            <person name="Bird C.P."/>
            <person name="Blakey S.E."/>
            <person name="Bray-Allen S."/>
            <person name="Brook J."/>
            <person name="Brown A.J."/>
            <person name="Brown J.Y."/>
            <person name="Burford D.C."/>
            <person name="Burrill W."/>
            <person name="Burton J."/>
            <person name="Carder C."/>
            <person name="Carter N.P."/>
            <person name="Chapman J.C."/>
            <person name="Clark S.Y."/>
            <person name="Clark G."/>
            <person name="Clee C.M."/>
            <person name="Clegg S."/>
            <person name="Cobley V."/>
            <person name="Collier R.E."/>
            <person name="Collins J.E."/>
            <person name="Colman L.K."/>
            <person name="Corby N.R."/>
            <person name="Coville G.J."/>
            <person name="Culley K.M."/>
            <person name="Dhami P."/>
            <person name="Davies J."/>
            <person name="Dunn M."/>
            <person name="Earthrowl M.E."/>
            <person name="Ellington A.E."/>
            <person name="Evans K.A."/>
            <person name="Faulkner L."/>
            <person name="Francis M.D."/>
            <person name="Frankish A."/>
            <person name="Frankland J."/>
            <person name="French L."/>
            <person name="Garner P."/>
            <person name="Garnett J."/>
            <person name="Ghori M.J."/>
            <person name="Gilby L.M."/>
            <person name="Gillson C.J."/>
            <person name="Glithero R.J."/>
            <person name="Grafham D.V."/>
            <person name="Grant M."/>
            <person name="Gribble S."/>
            <person name="Griffiths C."/>
            <person name="Griffiths M.N.D."/>
            <person name="Hall R."/>
            <person name="Halls K.S."/>
            <person name="Hammond S."/>
            <person name="Harley J.L."/>
            <person name="Hart E.A."/>
            <person name="Heath P.D."/>
            <person name="Heathcott R."/>
            <person name="Holmes S.J."/>
            <person name="Howden P.J."/>
            <person name="Howe K.L."/>
            <person name="Howell G.R."/>
            <person name="Huckle E."/>
            <person name="Humphray S.J."/>
            <person name="Humphries M.D."/>
            <person name="Hunt A.R."/>
            <person name="Johnson C.M."/>
            <person name="Joy A.A."/>
            <person name="Kay M."/>
            <person name="Keenan S.J."/>
            <person name="Kimberley A.M."/>
            <person name="King A."/>
            <person name="Laird G.K."/>
            <person name="Langford C."/>
            <person name="Lawlor S."/>
            <person name="Leongamornlert D.A."/>
            <person name="Leversha M."/>
            <person name="Lloyd C.R."/>
            <person name="Lloyd D.M."/>
            <person name="Loveland J.E."/>
            <person name="Lovell J."/>
            <person name="Martin S."/>
            <person name="Mashreghi-Mohammadi M."/>
            <person name="Maslen G.L."/>
            <person name="Matthews L."/>
            <person name="McCann O.T."/>
            <person name="McLaren S.J."/>
            <person name="McLay K."/>
            <person name="McMurray A."/>
            <person name="Moore M.J.F."/>
            <person name="Mullikin J.C."/>
            <person name="Niblett D."/>
            <person name="Nickerson T."/>
            <person name="Novik K.L."/>
            <person name="Oliver K."/>
            <person name="Overton-Larty E.K."/>
            <person name="Parker A."/>
            <person name="Patel R."/>
            <person name="Pearce A.V."/>
            <person name="Peck A.I."/>
            <person name="Phillimore B.J.C.T."/>
            <person name="Phillips S."/>
            <person name="Plumb R.W."/>
            <person name="Porter K.M."/>
            <person name="Ramsey Y."/>
            <person name="Ranby S.A."/>
            <person name="Rice C.M."/>
            <person name="Ross M.T."/>
            <person name="Searle S.M."/>
            <person name="Sehra H.K."/>
            <person name="Sheridan E."/>
            <person name="Skuce C.D."/>
            <person name="Smith S."/>
            <person name="Smith M."/>
            <person name="Spraggon L."/>
            <person name="Squares S.L."/>
            <person name="Steward C.A."/>
            <person name="Sycamore N."/>
            <person name="Tamlyn-Hall G."/>
            <person name="Tester J."/>
            <person name="Theaker A.J."/>
            <person name="Thomas D.W."/>
            <person name="Thorpe A."/>
            <person name="Tracey A."/>
            <person name="Tromans A."/>
            <person name="Tubby B."/>
            <person name="Wall M."/>
            <person name="Wallis J.M."/>
            <person name="West A.P."/>
            <person name="White S.S."/>
            <person name="Whitehead S.L."/>
            <person name="Whittaker H."/>
            <person name="Wild A."/>
            <person name="Willey D.J."/>
            <person name="Wilmer T.E."/>
            <person name="Wood J.M."/>
            <person name="Wray P.W."/>
            <person name="Wyatt J.C."/>
            <person name="Young L."/>
            <person name="Younger R.M."/>
            <person name="Bentley D.R."/>
            <person name="Coulson A."/>
            <person name="Durbin R.M."/>
            <person name="Hubbard T."/>
            <person name="Sulston J.E."/>
            <person name="Dunham I."/>
            <person name="Rogers J."/>
            <person name="Beck S."/>
        </authorList>
    </citation>
    <scope>NUCLEOTIDE SEQUENCE [LARGE SCALE GENOMIC DNA]</scope>
</reference>
<reference key="4">
    <citation type="journal article" date="2004" name="Genome Res.">
        <title>The status, quality, and expansion of the NIH full-length cDNA project: the Mammalian Gene Collection (MGC).</title>
        <authorList>
            <consortium name="The MGC Project Team"/>
        </authorList>
    </citation>
    <scope>NUCLEOTIDE SEQUENCE [LARGE SCALE MRNA]</scope>
    <source>
        <tissue>Skin</tissue>
    </source>
</reference>
<reference key="5">
    <citation type="journal article" date="2001" name="Genome Res.">
        <title>Towards a catalog of human genes and proteins: sequencing and analysis of 500 novel complete protein coding human cDNAs.</title>
        <authorList>
            <person name="Wiemann S."/>
            <person name="Weil B."/>
            <person name="Wellenreuther R."/>
            <person name="Gassenhuber J."/>
            <person name="Glassl S."/>
            <person name="Ansorge W."/>
            <person name="Boecher M."/>
            <person name="Bloecker H."/>
            <person name="Bauersachs S."/>
            <person name="Blum H."/>
            <person name="Lauber J."/>
            <person name="Duesterhoeft A."/>
            <person name="Beyer A."/>
            <person name="Koehrer K."/>
            <person name="Strack N."/>
            <person name="Mewes H.-W."/>
            <person name="Ottenwaelder B."/>
            <person name="Obermaier B."/>
            <person name="Tampe J."/>
            <person name="Heubner D."/>
            <person name="Wambutt R."/>
            <person name="Korn B."/>
            <person name="Klein M."/>
            <person name="Poustka A."/>
        </authorList>
    </citation>
    <scope>NUCLEOTIDE SEQUENCE [LARGE SCALE MRNA] OF 7-350</scope>
    <source>
        <tissue>Fetal kidney</tissue>
    </source>
</reference>
<reference key="6">
    <citation type="submission" date="2004-06" db="EMBL/GenBank/DDBJ databases">
        <title>Cloning of human full open reading frames in Gateway(TM) system entry vector (pDONR201).</title>
        <authorList>
            <person name="Ebert L."/>
            <person name="Schick M."/>
            <person name="Neubert P."/>
            <person name="Schatten R."/>
            <person name="Henze S."/>
            <person name="Korn B."/>
        </authorList>
    </citation>
    <scope>NUCLEOTIDE SEQUENCE [LARGE SCALE MRNA] OF 36-350</scope>
</reference>
<reference key="7">
    <citation type="journal article" date="2011" name="BMC Syst. Biol.">
        <title>Initial characterization of the human central proteome.</title>
        <authorList>
            <person name="Burkard T.R."/>
            <person name="Planyavsky M."/>
            <person name="Kaupe I."/>
            <person name="Breitwieser F.P."/>
            <person name="Buerckstuemmer T."/>
            <person name="Bennett K.L."/>
            <person name="Superti-Furga G."/>
            <person name="Colinge J."/>
        </authorList>
    </citation>
    <scope>IDENTIFICATION BY MASS SPECTROMETRY [LARGE SCALE ANALYSIS]</scope>
</reference>
<reference key="8">
    <citation type="journal article" date="2011" name="Cell Struct. Funct.">
        <title>Characterization of YIPF3 and YIPF4, cis-Golgi localizing Yip domain family proteins.</title>
        <authorList>
            <person name="Tanimoto K."/>
            <person name="Suzuki K."/>
            <person name="Jokitalo E."/>
            <person name="Sakai N."/>
            <person name="Sakaguchi T."/>
            <person name="Tamura D."/>
            <person name="Fujii G."/>
            <person name="Aoki K."/>
            <person name="Takada S."/>
            <person name="Ishida R."/>
            <person name="Tanabe M."/>
            <person name="Itoh H."/>
            <person name="Yoneda Y."/>
            <person name="Sohda M."/>
            <person name="Misumi Y."/>
            <person name="Nakamura N."/>
        </authorList>
    </citation>
    <scope>FUNCTION</scope>
    <scope>SUBCELLULAR LOCATION</scope>
    <scope>INTERACTION WITH YIPF4</scope>
    <scope>GLYCOSYLATION AT THR-333; THR-334; ASN-337 AND THR-346</scope>
</reference>
<reference key="9">
    <citation type="journal article" date="2012" name="Mol. Cell. Proteomics">
        <title>Human urinary glycoproteomics; attachment site specific analysis of N- and O-linked glycosylations by CID and ECD.</title>
        <authorList>
            <person name="Halim A."/>
            <person name="Nilsson J."/>
            <person name="Ruetschi U."/>
            <person name="Hesse C."/>
            <person name="Larson G."/>
        </authorList>
    </citation>
    <scope>GLYCOSYLATION AT THR-346</scope>
    <scope>STRUCTURE OF CARBOHYDRATES</scope>
    <scope>IDENTIFICATION BY MASS SPECTROMETRY</scope>
</reference>
<reference key="10">
    <citation type="journal article" date="2012" name="Proc. Natl. Acad. Sci. U.S.A.">
        <title>N-terminal acetylome analyses and functional insights of the N-terminal acetyltransferase NatB.</title>
        <authorList>
            <person name="Van Damme P."/>
            <person name="Lasa M."/>
            <person name="Polevoda B."/>
            <person name="Gazquez C."/>
            <person name="Elosegui-Artola A."/>
            <person name="Kim D.S."/>
            <person name="De Juan-Pardo E."/>
            <person name="Demeyer K."/>
            <person name="Hole K."/>
            <person name="Larrea E."/>
            <person name="Timmerman E."/>
            <person name="Prieto J."/>
            <person name="Arnesen T."/>
            <person name="Sherman F."/>
            <person name="Gevaert K."/>
            <person name="Aldabe R."/>
        </authorList>
    </citation>
    <scope>ACETYLATION [LARGE SCALE ANALYSIS] AT ALA-2</scope>
    <scope>CLEAVAGE OF INITIATOR METHIONINE [LARGE SCALE ANALYSIS]</scope>
    <scope>IDENTIFICATION BY MASS SPECTROMETRY [LARGE SCALE ANALYSIS]</scope>
</reference>
<reference key="11">
    <citation type="journal article" date="2013" name="J. Proteome Res.">
        <title>LC-MS/MS characterization of O-glycosylation sites and glycan structures of human cerebrospinal fluid glycoproteins.</title>
        <authorList>
            <person name="Halim A."/>
            <person name="Ruetschi U."/>
            <person name="Larson G."/>
            <person name="Nilsson J."/>
        </authorList>
    </citation>
    <scope>GLYCOSYLATION AT THR-339 AND THR-346</scope>
    <scope>IDENTIFICATION BY MASS SPECTROMETRY</scope>
</reference>
<reference key="12">
    <citation type="journal article" date="2017" name="Histochem. Cell Biol.">
        <title>Functional characterisation of the YIPF protein family in mammalian cells.</title>
        <authorList>
            <person name="Kranjc T."/>
            <person name="Dempsey E."/>
            <person name="Cagney G."/>
            <person name="Nakamura N."/>
            <person name="Shields D.C."/>
            <person name="Simpson J.C."/>
        </authorList>
    </citation>
    <scope>SUBCELLULAR LOCATION</scope>
    <scope>TOPOLOGY</scope>
    <scope>INTERACTION WITH YIPF4 AND YIPF5</scope>
</reference>
<feature type="initiator methionine" description="Removed" evidence="10">
    <location>
        <position position="1"/>
    </location>
</feature>
<feature type="chain" id="PRO_0000244446" description="Protein YIPF3">
    <location>
        <begin position="2"/>
        <end position="350"/>
    </location>
</feature>
<feature type="chain" id="PRO_0000418216" description="Protein YIPF3, 36 kDa form III">
    <location>
        <begin position="2"/>
        <end status="unknown"/>
    </location>
</feature>
<feature type="topological domain" description="Cytoplasmic" evidence="9">
    <location>
        <begin position="2"/>
        <end position="148"/>
    </location>
</feature>
<feature type="transmembrane region" description="Helical" evidence="1">
    <location>
        <begin position="149"/>
        <end position="169"/>
    </location>
</feature>
<feature type="topological domain" description="Lumenal" evidence="8">
    <location>
        <begin position="170"/>
        <end position="187"/>
    </location>
</feature>
<feature type="transmembrane region" description="Helical" evidence="1">
    <location>
        <begin position="188"/>
        <end position="208"/>
    </location>
</feature>
<feature type="topological domain" description="Cytoplasmic" evidence="8">
    <location>
        <begin position="209"/>
        <end position="214"/>
    </location>
</feature>
<feature type="transmembrane region" description="Helical" evidence="1">
    <location>
        <begin position="215"/>
        <end position="237"/>
    </location>
</feature>
<feature type="topological domain" description="Lumenal" evidence="8">
    <location>
        <begin position="238"/>
        <end position="240"/>
    </location>
</feature>
<feature type="transmembrane region" description="Helical" evidence="1">
    <location>
        <begin position="241"/>
        <end position="263"/>
    </location>
</feature>
<feature type="topological domain" description="Cytoplasmic" evidence="8">
    <location>
        <begin position="264"/>
        <end position="274"/>
    </location>
</feature>
<feature type="transmembrane region" description="Helical" evidence="1">
    <location>
        <begin position="275"/>
        <end position="295"/>
    </location>
</feature>
<feature type="topological domain" description="Lumenal" evidence="9">
    <location>
        <begin position="296"/>
        <end position="350"/>
    </location>
</feature>
<feature type="region of interest" description="Disordered" evidence="2">
    <location>
        <begin position="1"/>
        <end position="51"/>
    </location>
</feature>
<feature type="compositionally biased region" description="Low complexity" evidence="2">
    <location>
        <begin position="1"/>
        <end position="10"/>
    </location>
</feature>
<feature type="modified residue" description="N-acetylalanine" evidence="10">
    <location>
        <position position="2"/>
    </location>
</feature>
<feature type="glycosylation site" description="O-linked (GalNAc...) threonine" evidence="4">
    <location>
        <position position="333"/>
    </location>
</feature>
<feature type="glycosylation site" description="O-linked (GalNAc...) threonine" evidence="4">
    <location>
        <position position="334"/>
    </location>
</feature>
<feature type="glycosylation site" description="N-linked (GlcNAc...) asparagine" evidence="4">
    <location>
        <position position="337"/>
    </location>
</feature>
<feature type="glycosylation site" description="O-linked (GalNAc...) threonine" evidence="6">
    <location>
        <position position="339"/>
    </location>
</feature>
<feature type="glycosylation site" description="O-linked (GalNAc...) threonine" evidence="4 5 6">
    <location>
        <position position="346"/>
    </location>
</feature>
<feature type="sequence variant" id="VAR_026906" description="In dbSNP:rs2231763.">
    <original>A</original>
    <variation>V</variation>
    <location>
        <position position="5"/>
    </location>
</feature>
<feature type="sequence conflict" description="In Ref. 6; CAG38572." evidence="8" ref="6">
    <original>R</original>
    <variation>G</variation>
    <location>
        <position position="103"/>
    </location>
</feature>
<feature type="sequence conflict" description="In Ref. 2; BAA91439." evidence="8" ref="2">
    <original>M</original>
    <variation>V</variation>
    <location>
        <position position="142"/>
    </location>
</feature>
<feature type="sequence conflict" description="In Ref. 1; AAM21161." evidence="8" ref="1">
    <original>F</original>
    <variation>L</variation>
    <location>
        <position position="161"/>
    </location>
</feature>
<feature type="sequence conflict" description="In Ref. 5; CAB43375 and 6; CAG38572." evidence="8" ref="5 6">
    <original>D</original>
    <variation>V</variation>
    <location>
        <position position="305"/>
    </location>
</feature>
<evidence type="ECO:0000255" key="1"/>
<evidence type="ECO:0000256" key="2">
    <source>
        <dbReference type="SAM" id="MobiDB-lite"/>
    </source>
</evidence>
<evidence type="ECO:0000269" key="3">
    <source>
    </source>
</evidence>
<evidence type="ECO:0000269" key="4">
    <source>
    </source>
</evidence>
<evidence type="ECO:0000269" key="5">
    <source>
    </source>
</evidence>
<evidence type="ECO:0000269" key="6">
    <source>
    </source>
</evidence>
<evidence type="ECO:0000269" key="7">
    <source>
    </source>
</evidence>
<evidence type="ECO:0000305" key="8"/>
<evidence type="ECO:0000305" key="9">
    <source>
    </source>
</evidence>
<evidence type="ECO:0007744" key="10">
    <source>
    </source>
</evidence>
<organism>
    <name type="scientific">Homo sapiens</name>
    <name type="common">Human</name>
    <dbReference type="NCBI Taxonomy" id="9606"/>
    <lineage>
        <taxon>Eukaryota</taxon>
        <taxon>Metazoa</taxon>
        <taxon>Chordata</taxon>
        <taxon>Craniata</taxon>
        <taxon>Vertebrata</taxon>
        <taxon>Euteleostomi</taxon>
        <taxon>Mammalia</taxon>
        <taxon>Eutheria</taxon>
        <taxon>Euarchontoglires</taxon>
        <taxon>Primates</taxon>
        <taxon>Haplorrhini</taxon>
        <taxon>Catarrhini</taxon>
        <taxon>Hominidae</taxon>
        <taxon>Homo</taxon>
    </lineage>
</organism>
<name>YIPF3_HUMAN</name>
<protein>
    <recommendedName>
        <fullName>Protein YIPF3</fullName>
    </recommendedName>
    <alternativeName>
        <fullName>Killer lineage protein 1</fullName>
    </alternativeName>
    <alternativeName>
        <fullName>Natural killer cell-specific antigen KLIP1</fullName>
    </alternativeName>
    <alternativeName>
        <fullName>YIP1 family member 3</fullName>
    </alternativeName>
    <component>
        <recommendedName>
            <fullName>Protein YIPF3, 36 kDa form III</fullName>
        </recommendedName>
    </component>
</protein>
<proteinExistence type="evidence at protein level"/>
<comment type="function">
    <text evidence="3 4">Involved in the maintenance of the Golgi structure. May play a role in hematopoiesis.</text>
</comment>
<comment type="subunit">
    <text evidence="4 7">Interacts with YIPF4 and YIPF5.</text>
</comment>
<comment type="interaction">
    <interactant intactId="EBI-743787">
        <id>Q9GZM5</id>
    </interactant>
    <interactant intactId="EBI-740785">
        <id>P49639</id>
        <label>HOXA1</label>
    </interactant>
    <organismsDiffer>false</organismsDiffer>
    <experiments>3</experiments>
</comment>
<comment type="interaction">
    <interactant intactId="EBI-743787">
        <id>Q9GZM5</id>
    </interactant>
    <interactant intactId="EBI-6509505">
        <id>Q0VD86</id>
        <label>INCA1</label>
    </interactant>
    <organismsDiffer>false</organismsDiffer>
    <experiments>3</experiments>
</comment>
<comment type="interaction">
    <interactant intactId="EBI-743787">
        <id>Q9GZM5</id>
    </interactant>
    <interactant intactId="EBI-11749135">
        <id>Q8IUG1</id>
        <label>KRTAP1-3</label>
    </interactant>
    <organismsDiffer>false</organismsDiffer>
    <experiments>3</experiments>
</comment>
<comment type="interaction">
    <interactant intactId="EBI-743787">
        <id>Q9GZM5</id>
    </interactant>
    <interactant intactId="EBI-10171774">
        <id>P60410</id>
        <label>KRTAP10-8</label>
    </interactant>
    <organismsDiffer>false</organismsDiffer>
    <experiments>3</experiments>
</comment>
<comment type="interaction">
    <interactant intactId="EBI-743787">
        <id>Q9GZM5</id>
    </interactant>
    <interactant intactId="EBI-10172052">
        <id>P60411</id>
        <label>KRTAP10-9</label>
    </interactant>
    <organismsDiffer>false</organismsDiffer>
    <experiments>3</experiments>
</comment>
<comment type="interaction">
    <interactant intactId="EBI-743787">
        <id>Q9GZM5</id>
    </interactant>
    <interactant intactId="EBI-1052037">
        <id>Q8IUC1</id>
        <label>KRTAP11-1</label>
    </interactant>
    <organismsDiffer>false</organismsDiffer>
    <experiments>3</experiments>
</comment>
<comment type="interaction">
    <interactant intactId="EBI-743787">
        <id>Q9GZM5</id>
    </interactant>
    <interactant intactId="EBI-10176379">
        <id>P59991</id>
        <label>KRTAP12-2</label>
    </interactant>
    <organismsDiffer>false</organismsDiffer>
    <experiments>3</experiments>
</comment>
<comment type="interaction">
    <interactant intactId="EBI-743787">
        <id>Q9GZM5</id>
    </interactant>
    <interactant intactId="EBI-751260">
        <id>Q9BYR7</id>
        <label>KRTAP3-2</label>
    </interactant>
    <organismsDiffer>false</organismsDiffer>
    <experiments>7</experiments>
</comment>
<comment type="interaction">
    <interactant intactId="EBI-743787">
        <id>Q9GZM5</id>
    </interactant>
    <interactant intactId="EBI-3958099">
        <id>P26371</id>
        <label>KRTAP5-9</label>
    </interactant>
    <organismsDiffer>false</organismsDiffer>
    <experiments>3</experiments>
</comment>
<comment type="interaction">
    <interactant intactId="EBI-743787">
        <id>Q9GZM5</id>
    </interactant>
    <interactant intactId="EBI-10185730">
        <id>Q9BYQ2</id>
        <label>KRTAP9-4</label>
    </interactant>
    <organismsDiffer>false</organismsDiffer>
    <experiments>3</experiments>
</comment>
<comment type="interaction">
    <interactant intactId="EBI-743787">
        <id>Q9GZM5</id>
    </interactant>
    <interactant intactId="EBI-11958364">
        <id>Q9BYQ0</id>
        <label>KRTAP9-8</label>
    </interactant>
    <organismsDiffer>false</organismsDiffer>
    <experiments>3</experiments>
</comment>
<comment type="interaction">
    <interactant intactId="EBI-743787">
        <id>Q9GZM5</id>
    </interactant>
    <interactant intactId="EBI-945833">
        <id>Q7Z3S9</id>
        <label>NOTCH2NLA</label>
    </interactant>
    <organismsDiffer>false</organismsDiffer>
    <experiments>4</experiments>
</comment>
<comment type="interaction">
    <interactant intactId="EBI-743787">
        <id>Q9GZM5</id>
    </interactant>
    <interactant intactId="EBI-5235829">
        <id>Q8IWZ5</id>
        <label>TRIM42</label>
    </interactant>
    <organismsDiffer>false</organismsDiffer>
    <experiments>3</experiments>
</comment>
<comment type="interaction">
    <interactant intactId="EBI-743787">
        <id>Q9GZM5</id>
    </interactant>
    <interactant intactId="EBI-751253">
        <id>Q9BSR8</id>
        <label>YIPF4</label>
    </interactant>
    <organismsDiffer>false</organismsDiffer>
    <experiments>10</experiments>
</comment>
<comment type="subcellular location">
    <subcellularLocation>
        <location>Cell membrane</location>
        <topology>Multi-pass membrane protein</topology>
    </subcellularLocation>
    <subcellularLocation>
        <location>Cytoplasm</location>
    </subcellularLocation>
    <subcellularLocation>
        <location evidence="7">Golgi apparatus</location>
        <location evidence="7">cis-Golgi network membrane</location>
        <topology>Multi-pass membrane protein</topology>
    </subcellularLocation>
    <text>Localization to the cytoplasm or to the cell membrane is developmentally and ontogenetically regulated.</text>
</comment>
<comment type="tissue specificity">
    <text evidence="3">Expressed by nucleated hematopoietic cells (at protein level).</text>
</comment>
<comment type="developmental stage">
    <text evidence="3">Expressed in fetal liver (at protein level). Expressed in embryonic hematopoiesis sites.</text>
</comment>
<comment type="PTM">
    <text evidence="3 4 5 6">N-glycosylated in the ER (40 kDa form I), then O-glycosylated in the Golgi apparatus (46 kDa form II), the C-terminal lumenal region is later removed in the Golgi apparatus to produce a 36 kDa form III. O-glycosylated with core 1-like and core 2-like glycans. O-glycan heterogeneity at Thr-346: HexNAc (minor), HexHexNAc (major), Hex1HexNAc2 (minor), Hex2HexNAc2 (minor) and dHex1Hex2HexNAc2 (minor).</text>
</comment>
<comment type="similarity">
    <text evidence="8">Belongs to the YIP1 family.</text>
</comment>
<dbReference type="EMBL" id="AF162672">
    <property type="protein sequence ID" value="AAM21161.1"/>
    <property type="molecule type" value="mRNA"/>
</dbReference>
<dbReference type="EMBL" id="AK000946">
    <property type="protein sequence ID" value="BAA91439.1"/>
    <property type="molecule type" value="mRNA"/>
</dbReference>
<dbReference type="EMBL" id="AK021655">
    <property type="protein sequence ID" value="BAB13866.1"/>
    <property type="molecule type" value="mRNA"/>
</dbReference>
<dbReference type="EMBL" id="AK022757">
    <property type="protein sequence ID" value="BAB14231.1"/>
    <property type="molecule type" value="mRNA"/>
</dbReference>
<dbReference type="EMBL" id="AL355802">
    <property type="status" value="NOT_ANNOTATED_CDS"/>
    <property type="molecule type" value="Genomic_DNA"/>
</dbReference>
<dbReference type="EMBL" id="BC019297">
    <property type="protein sequence ID" value="AAH19297.1"/>
    <property type="molecule type" value="mRNA"/>
</dbReference>
<dbReference type="EMBL" id="AL050274">
    <property type="protein sequence ID" value="CAB43375.2"/>
    <property type="molecule type" value="mRNA"/>
</dbReference>
<dbReference type="EMBL" id="CR533541">
    <property type="protein sequence ID" value="CAG38572.1"/>
    <property type="molecule type" value="mRNA"/>
</dbReference>
<dbReference type="CCDS" id="CCDS4899.1"/>
<dbReference type="PIR" id="T08721">
    <property type="entry name" value="T08721"/>
</dbReference>
<dbReference type="RefSeq" id="NP_056203.2">
    <property type="nucleotide sequence ID" value="NM_015388.3"/>
</dbReference>
<dbReference type="BioGRID" id="117370">
    <property type="interactions" value="211"/>
</dbReference>
<dbReference type="FunCoup" id="Q9GZM5">
    <property type="interactions" value="2088"/>
</dbReference>
<dbReference type="IntAct" id="Q9GZM5">
    <property type="interactions" value="167"/>
</dbReference>
<dbReference type="MINT" id="Q9GZM5"/>
<dbReference type="STRING" id="9606.ENSP00000361499"/>
<dbReference type="TCDB" id="9.B.135.2.1">
    <property type="family name" value="the membrane trafficking yip (yip) family"/>
</dbReference>
<dbReference type="CarbonylDB" id="Q9GZM5"/>
<dbReference type="GlyConnect" id="641">
    <property type="glycosylation" value="7 N-Linked glycans (1 site), 40 O-Linked glycans (3 sites)"/>
</dbReference>
<dbReference type="GlyCosmos" id="Q9GZM5">
    <property type="glycosylation" value="6 sites, 22 glycans"/>
</dbReference>
<dbReference type="GlyGen" id="Q9GZM5">
    <property type="glycosylation" value="8 sites, 8 N-linked glycans (1 site), 17 O-linked glycans (6 sites)"/>
</dbReference>
<dbReference type="iPTMnet" id="Q9GZM5"/>
<dbReference type="MetOSite" id="Q9GZM5"/>
<dbReference type="PhosphoSitePlus" id="Q9GZM5"/>
<dbReference type="SwissPalm" id="Q9GZM5"/>
<dbReference type="BioMuta" id="YIPF3"/>
<dbReference type="DMDM" id="74752534"/>
<dbReference type="jPOST" id="Q9GZM5"/>
<dbReference type="MassIVE" id="Q9GZM5"/>
<dbReference type="PaxDb" id="9606-ENSP00000361499"/>
<dbReference type="PeptideAtlas" id="Q9GZM5"/>
<dbReference type="ProteomicsDB" id="80087"/>
<dbReference type="Pumba" id="Q9GZM5"/>
<dbReference type="Antibodypedia" id="3101">
    <property type="antibodies" value="107 antibodies from 22 providers"/>
</dbReference>
<dbReference type="DNASU" id="25844"/>
<dbReference type="Ensembl" id="ENST00000372422.7">
    <property type="protein sequence ID" value="ENSP00000361499.2"/>
    <property type="gene ID" value="ENSG00000137207.12"/>
</dbReference>
<dbReference type="GeneID" id="25844"/>
<dbReference type="KEGG" id="hsa:25844"/>
<dbReference type="MANE-Select" id="ENST00000372422.7">
    <property type="protein sequence ID" value="ENSP00000361499.2"/>
    <property type="RefSeq nucleotide sequence ID" value="NM_015388.4"/>
    <property type="RefSeq protein sequence ID" value="NP_056203.2"/>
</dbReference>
<dbReference type="UCSC" id="uc003ovl.2">
    <property type="organism name" value="human"/>
</dbReference>
<dbReference type="AGR" id="HGNC:21023"/>
<dbReference type="CTD" id="25844"/>
<dbReference type="DisGeNET" id="25844"/>
<dbReference type="GeneCards" id="YIPF3"/>
<dbReference type="HGNC" id="HGNC:21023">
    <property type="gene designation" value="YIPF3"/>
</dbReference>
<dbReference type="HPA" id="ENSG00000137207">
    <property type="expression patterns" value="Low tissue specificity"/>
</dbReference>
<dbReference type="MalaCards" id="YIPF3"/>
<dbReference type="MIM" id="609775">
    <property type="type" value="gene"/>
</dbReference>
<dbReference type="neXtProt" id="NX_Q9GZM5"/>
<dbReference type="OpenTargets" id="ENSG00000137207"/>
<dbReference type="PharmGKB" id="PA134946615"/>
<dbReference type="VEuPathDB" id="HostDB:ENSG00000137207"/>
<dbReference type="eggNOG" id="KOG3114">
    <property type="taxonomic scope" value="Eukaryota"/>
</dbReference>
<dbReference type="GeneTree" id="ENSGT00940000153766"/>
<dbReference type="InParanoid" id="Q9GZM5"/>
<dbReference type="OMA" id="HCIVLFV"/>
<dbReference type="OrthoDB" id="10256463at2759"/>
<dbReference type="PAN-GO" id="Q9GZM5">
    <property type="GO annotations" value="1 GO annotation based on evolutionary models"/>
</dbReference>
<dbReference type="PhylomeDB" id="Q9GZM5"/>
<dbReference type="TreeFam" id="TF314073"/>
<dbReference type="PathwayCommons" id="Q9GZM5"/>
<dbReference type="SignaLink" id="Q9GZM5"/>
<dbReference type="BioGRID-ORCS" id="25844">
    <property type="hits" value="57 hits in 1158 CRISPR screens"/>
</dbReference>
<dbReference type="ChiTaRS" id="YIPF3">
    <property type="organism name" value="human"/>
</dbReference>
<dbReference type="GeneWiki" id="YIPF3"/>
<dbReference type="GenomeRNAi" id="25844"/>
<dbReference type="Pharos" id="Q9GZM5">
    <property type="development level" value="Tbio"/>
</dbReference>
<dbReference type="PRO" id="PR:Q9GZM5"/>
<dbReference type="Proteomes" id="UP000005640">
    <property type="component" value="Chromosome 6"/>
</dbReference>
<dbReference type="RNAct" id="Q9GZM5">
    <property type="molecule type" value="protein"/>
</dbReference>
<dbReference type="Bgee" id="ENSG00000137207">
    <property type="expression patterns" value="Expressed in body of pancreas and 187 other cell types or tissues"/>
</dbReference>
<dbReference type="ExpressionAtlas" id="Q9GZM5">
    <property type="expression patterns" value="baseline and differential"/>
</dbReference>
<dbReference type="GO" id="GO:0005794">
    <property type="term" value="C:Golgi apparatus"/>
    <property type="evidence" value="ECO:0000314"/>
    <property type="project" value="HPA"/>
</dbReference>
<dbReference type="GO" id="GO:0043231">
    <property type="term" value="C:intracellular membrane-bounded organelle"/>
    <property type="evidence" value="ECO:0000314"/>
    <property type="project" value="HPA"/>
</dbReference>
<dbReference type="GO" id="GO:0005886">
    <property type="term" value="C:plasma membrane"/>
    <property type="evidence" value="ECO:0007669"/>
    <property type="project" value="UniProtKB-SubCell"/>
</dbReference>
<dbReference type="GO" id="GO:0030133">
    <property type="term" value="C:transport vesicle"/>
    <property type="evidence" value="ECO:0000314"/>
    <property type="project" value="LIFEdb"/>
</dbReference>
<dbReference type="GO" id="GO:0030154">
    <property type="term" value="P:cell differentiation"/>
    <property type="evidence" value="ECO:0007669"/>
    <property type="project" value="UniProtKB-KW"/>
</dbReference>
<dbReference type="InterPro" id="IPR051521">
    <property type="entry name" value="tRNA_Mod/Golgi_Maint"/>
</dbReference>
<dbReference type="PANTHER" id="PTHR15627">
    <property type="entry name" value="NATURAL KILLER CELL-SPECIFIC ANTIGEN KLIP1"/>
    <property type="match status" value="1"/>
</dbReference>
<dbReference type="PANTHER" id="PTHR15627:SF14">
    <property type="entry name" value="PROTEIN YIPF3"/>
    <property type="match status" value="1"/>
</dbReference>
<accession>Q9GZM5</accession>
<accession>Q5JTD2</accession>
<accession>Q6FI85</accession>
<accession>Q8NI57</accession>
<accession>Q9NWE3</accession>
<accession>Q9Y3U9</accession>
<keyword id="KW-0007">Acetylation</keyword>
<keyword id="KW-1003">Cell membrane</keyword>
<keyword id="KW-0963">Cytoplasm</keyword>
<keyword id="KW-0221">Differentiation</keyword>
<keyword id="KW-0325">Glycoprotein</keyword>
<keyword id="KW-0333">Golgi apparatus</keyword>
<keyword id="KW-0472">Membrane</keyword>
<keyword id="KW-1267">Proteomics identification</keyword>
<keyword id="KW-1185">Reference proteome</keyword>
<keyword id="KW-0812">Transmembrane</keyword>
<keyword id="KW-1133">Transmembrane helix</keyword>
<gene>
    <name type="primary">YIPF3</name>
    <name type="synonym">C6orf109</name>
    <name type="synonym">KLIP1</name>
</gene>